<dbReference type="EMBL" id="AL009126">
    <property type="protein sequence ID" value="CAB13200.1"/>
    <property type="molecule type" value="Genomic_DNA"/>
</dbReference>
<dbReference type="PIR" id="B69861">
    <property type="entry name" value="B69861"/>
</dbReference>
<dbReference type="RefSeq" id="NP_389226.1">
    <property type="nucleotide sequence ID" value="NC_000964.3"/>
</dbReference>
<dbReference type="RefSeq" id="WP_009967095.1">
    <property type="nucleotide sequence ID" value="NZ_OZ025638.1"/>
</dbReference>
<dbReference type="FunCoup" id="O34908">
    <property type="interactions" value="377"/>
</dbReference>
<dbReference type="STRING" id="224308.BSU13430"/>
<dbReference type="PaxDb" id="224308-BSU13430"/>
<dbReference type="DNASU" id="939381"/>
<dbReference type="EnsemblBacteria" id="CAB13200">
    <property type="protein sequence ID" value="CAB13200"/>
    <property type="gene ID" value="BSU_13430"/>
</dbReference>
<dbReference type="GeneID" id="939381"/>
<dbReference type="KEGG" id="bsu:BSU13430"/>
<dbReference type="PATRIC" id="fig|224308.179.peg.1458"/>
<dbReference type="eggNOG" id="COG0586">
    <property type="taxonomic scope" value="Bacteria"/>
</dbReference>
<dbReference type="InParanoid" id="O34908"/>
<dbReference type="OrthoDB" id="9813426at2"/>
<dbReference type="PhylomeDB" id="O34908"/>
<dbReference type="BioCyc" id="BSUB:BSU13430-MONOMER"/>
<dbReference type="Proteomes" id="UP000001570">
    <property type="component" value="Chromosome"/>
</dbReference>
<dbReference type="GO" id="GO:0005886">
    <property type="term" value="C:plasma membrane"/>
    <property type="evidence" value="ECO:0000318"/>
    <property type="project" value="GO_Central"/>
</dbReference>
<dbReference type="InterPro" id="IPR051311">
    <property type="entry name" value="DedA_domain"/>
</dbReference>
<dbReference type="InterPro" id="IPR032816">
    <property type="entry name" value="VTT_dom"/>
</dbReference>
<dbReference type="PANTHER" id="PTHR42709">
    <property type="entry name" value="ALKALINE PHOSPHATASE LIKE PROTEIN"/>
    <property type="match status" value="1"/>
</dbReference>
<dbReference type="PANTHER" id="PTHR42709:SF6">
    <property type="entry name" value="UNDECAPRENYL PHOSPHATE TRANSPORTER A"/>
    <property type="match status" value="1"/>
</dbReference>
<dbReference type="Pfam" id="PF09335">
    <property type="entry name" value="VTT_dom"/>
    <property type="match status" value="1"/>
</dbReference>
<feature type="chain" id="PRO_0000386476" description="Uncharacterized membrane protein YkoX">
    <location>
        <begin position="1"/>
        <end position="221"/>
    </location>
</feature>
<feature type="transmembrane region" description="Helical" evidence="1">
    <location>
        <begin position="30"/>
        <end position="50"/>
    </location>
</feature>
<feature type="transmembrane region" description="Helical" evidence="1">
    <location>
        <begin position="62"/>
        <end position="82"/>
    </location>
</feature>
<feature type="transmembrane region" description="Helical" evidence="1">
    <location>
        <begin position="144"/>
        <end position="164"/>
    </location>
</feature>
<feature type="transmembrane region" description="Helical" evidence="1">
    <location>
        <begin position="179"/>
        <end position="199"/>
    </location>
</feature>
<accession>O34908</accession>
<name>YKOX_BACSU</name>
<gene>
    <name type="primary">ykoX</name>
    <name type="ordered locus">BSU13430</name>
</gene>
<keyword id="KW-1003">Cell membrane</keyword>
<keyword id="KW-0472">Membrane</keyword>
<keyword id="KW-1185">Reference proteome</keyword>
<keyword id="KW-0812">Transmembrane</keyword>
<keyword id="KW-1133">Transmembrane helix</keyword>
<sequence length="221" mass="24940">MIHKHETRELVAIEELVMSWIEAFKSLSYFGIFLALSIEFIPAEVVLPLAGYWVSKGDMTLAGVVLAGSLGGVAGPLTLYWIGRYGGRPFLERFGKYLFIKPEALDKSDNFFKKHGGFVAFSGRFLPGIRTLISIPCGIAKMNVWVFSLYTFIAMLPITFVYVYLGVKLGENWKAVGSILDQYMLPIGIAILALFLLYLLMKKRKKRTHSEQLSVFLKNKR</sequence>
<evidence type="ECO:0000255" key="1"/>
<evidence type="ECO:0000305" key="2"/>
<reference key="1">
    <citation type="journal article" date="1997" name="Nature">
        <title>The complete genome sequence of the Gram-positive bacterium Bacillus subtilis.</title>
        <authorList>
            <person name="Kunst F."/>
            <person name="Ogasawara N."/>
            <person name="Moszer I."/>
            <person name="Albertini A.M."/>
            <person name="Alloni G."/>
            <person name="Azevedo V."/>
            <person name="Bertero M.G."/>
            <person name="Bessieres P."/>
            <person name="Bolotin A."/>
            <person name="Borchert S."/>
            <person name="Borriss R."/>
            <person name="Boursier L."/>
            <person name="Brans A."/>
            <person name="Braun M."/>
            <person name="Brignell S.C."/>
            <person name="Bron S."/>
            <person name="Brouillet S."/>
            <person name="Bruschi C.V."/>
            <person name="Caldwell B."/>
            <person name="Capuano V."/>
            <person name="Carter N.M."/>
            <person name="Choi S.-K."/>
            <person name="Codani J.-J."/>
            <person name="Connerton I.F."/>
            <person name="Cummings N.J."/>
            <person name="Daniel R.A."/>
            <person name="Denizot F."/>
            <person name="Devine K.M."/>
            <person name="Duesterhoeft A."/>
            <person name="Ehrlich S.D."/>
            <person name="Emmerson P.T."/>
            <person name="Entian K.-D."/>
            <person name="Errington J."/>
            <person name="Fabret C."/>
            <person name="Ferrari E."/>
            <person name="Foulger D."/>
            <person name="Fritz C."/>
            <person name="Fujita M."/>
            <person name="Fujita Y."/>
            <person name="Fuma S."/>
            <person name="Galizzi A."/>
            <person name="Galleron N."/>
            <person name="Ghim S.-Y."/>
            <person name="Glaser P."/>
            <person name="Goffeau A."/>
            <person name="Golightly E.J."/>
            <person name="Grandi G."/>
            <person name="Guiseppi G."/>
            <person name="Guy B.J."/>
            <person name="Haga K."/>
            <person name="Haiech J."/>
            <person name="Harwood C.R."/>
            <person name="Henaut A."/>
            <person name="Hilbert H."/>
            <person name="Holsappel S."/>
            <person name="Hosono S."/>
            <person name="Hullo M.-F."/>
            <person name="Itaya M."/>
            <person name="Jones L.-M."/>
            <person name="Joris B."/>
            <person name="Karamata D."/>
            <person name="Kasahara Y."/>
            <person name="Klaerr-Blanchard M."/>
            <person name="Klein C."/>
            <person name="Kobayashi Y."/>
            <person name="Koetter P."/>
            <person name="Koningstein G."/>
            <person name="Krogh S."/>
            <person name="Kumano M."/>
            <person name="Kurita K."/>
            <person name="Lapidus A."/>
            <person name="Lardinois S."/>
            <person name="Lauber J."/>
            <person name="Lazarevic V."/>
            <person name="Lee S.-M."/>
            <person name="Levine A."/>
            <person name="Liu H."/>
            <person name="Masuda S."/>
            <person name="Mauel C."/>
            <person name="Medigue C."/>
            <person name="Medina N."/>
            <person name="Mellado R.P."/>
            <person name="Mizuno M."/>
            <person name="Moestl D."/>
            <person name="Nakai S."/>
            <person name="Noback M."/>
            <person name="Noone D."/>
            <person name="O'Reilly M."/>
            <person name="Ogawa K."/>
            <person name="Ogiwara A."/>
            <person name="Oudega B."/>
            <person name="Park S.-H."/>
            <person name="Parro V."/>
            <person name="Pohl T.M."/>
            <person name="Portetelle D."/>
            <person name="Porwollik S."/>
            <person name="Prescott A.M."/>
            <person name="Presecan E."/>
            <person name="Pujic P."/>
            <person name="Purnelle B."/>
            <person name="Rapoport G."/>
            <person name="Rey M."/>
            <person name="Reynolds S."/>
            <person name="Rieger M."/>
            <person name="Rivolta C."/>
            <person name="Rocha E."/>
            <person name="Roche B."/>
            <person name="Rose M."/>
            <person name="Sadaie Y."/>
            <person name="Sato T."/>
            <person name="Scanlan E."/>
            <person name="Schleich S."/>
            <person name="Schroeter R."/>
            <person name="Scoffone F."/>
            <person name="Sekiguchi J."/>
            <person name="Sekowska A."/>
            <person name="Seror S.J."/>
            <person name="Serror P."/>
            <person name="Shin B.-S."/>
            <person name="Soldo B."/>
            <person name="Sorokin A."/>
            <person name="Tacconi E."/>
            <person name="Takagi T."/>
            <person name="Takahashi H."/>
            <person name="Takemaru K."/>
            <person name="Takeuchi M."/>
            <person name="Tamakoshi A."/>
            <person name="Tanaka T."/>
            <person name="Terpstra P."/>
            <person name="Tognoni A."/>
            <person name="Tosato V."/>
            <person name="Uchiyama S."/>
            <person name="Vandenbol M."/>
            <person name="Vannier F."/>
            <person name="Vassarotti A."/>
            <person name="Viari A."/>
            <person name="Wambutt R."/>
            <person name="Wedler E."/>
            <person name="Wedler H."/>
            <person name="Weitzenegger T."/>
            <person name="Winters P."/>
            <person name="Wipat A."/>
            <person name="Yamamoto H."/>
            <person name="Yamane K."/>
            <person name="Yasumoto K."/>
            <person name="Yata K."/>
            <person name="Yoshida K."/>
            <person name="Yoshikawa H.-F."/>
            <person name="Zumstein E."/>
            <person name="Yoshikawa H."/>
            <person name="Danchin A."/>
        </authorList>
    </citation>
    <scope>NUCLEOTIDE SEQUENCE [LARGE SCALE GENOMIC DNA]</scope>
    <source>
        <strain>168</strain>
    </source>
</reference>
<comment type="subcellular location">
    <subcellularLocation>
        <location evidence="2">Cell membrane</location>
        <topology evidence="2">Multi-pass membrane protein</topology>
    </subcellularLocation>
</comment>
<comment type="similarity">
    <text evidence="2">Belongs to the DedA family.</text>
</comment>
<protein>
    <recommendedName>
        <fullName>Uncharacterized membrane protein YkoX</fullName>
    </recommendedName>
</protein>
<organism>
    <name type="scientific">Bacillus subtilis (strain 168)</name>
    <dbReference type="NCBI Taxonomy" id="224308"/>
    <lineage>
        <taxon>Bacteria</taxon>
        <taxon>Bacillati</taxon>
        <taxon>Bacillota</taxon>
        <taxon>Bacilli</taxon>
        <taxon>Bacillales</taxon>
        <taxon>Bacillaceae</taxon>
        <taxon>Bacillus</taxon>
    </lineage>
</organism>
<proteinExistence type="inferred from homology"/>